<dbReference type="EC" id="2.4.1.-"/>
<dbReference type="EMBL" id="X58121">
    <property type="protein sequence ID" value="CAA41123.1"/>
    <property type="molecule type" value="Genomic_DNA"/>
</dbReference>
<dbReference type="EMBL" id="U55020">
    <property type="protein sequence ID" value="AAC49635.1"/>
    <property type="molecule type" value="Genomic_DNA"/>
</dbReference>
<dbReference type="EMBL" id="Z75057">
    <property type="protein sequence ID" value="CAA99355.1"/>
    <property type="molecule type" value="Genomic_DNA"/>
</dbReference>
<dbReference type="EMBL" id="BK006948">
    <property type="protein sequence ID" value="DAA10922.2"/>
    <property type="molecule type" value="Genomic_DNA"/>
</dbReference>
<dbReference type="PIR" id="S67037">
    <property type="entry name" value="S67037"/>
</dbReference>
<dbReference type="RefSeq" id="NP_014792.4">
    <property type="nucleotide sequence ID" value="NM_001183568.4"/>
</dbReference>
<dbReference type="BioGRID" id="34545">
    <property type="interactions" value="329"/>
</dbReference>
<dbReference type="FunCoup" id="Q04174">
    <property type="interactions" value="66"/>
</dbReference>
<dbReference type="STRING" id="4932.YOR149C"/>
<dbReference type="CAZy" id="GT22">
    <property type="family name" value="Glycosyltransferase Family 22"/>
</dbReference>
<dbReference type="GlyCosmos" id="Q04174">
    <property type="glycosylation" value="2 sites, No reported glycans"/>
</dbReference>
<dbReference type="GlyGen" id="Q04174">
    <property type="glycosylation" value="2 sites"/>
</dbReference>
<dbReference type="PaxDb" id="4932-YOR149C"/>
<dbReference type="PeptideAtlas" id="Q04174"/>
<dbReference type="EnsemblFungi" id="YOR149C_mRNA">
    <property type="protein sequence ID" value="YOR149C"/>
    <property type="gene ID" value="YOR149C"/>
</dbReference>
<dbReference type="GeneID" id="854320"/>
<dbReference type="KEGG" id="sce:YOR149C"/>
<dbReference type="AGR" id="SGD:S000005675"/>
<dbReference type="SGD" id="S000005675">
    <property type="gene designation" value="SMP3"/>
</dbReference>
<dbReference type="VEuPathDB" id="FungiDB:YOR149C"/>
<dbReference type="eggNOG" id="KOG4123">
    <property type="taxonomic scope" value="Eukaryota"/>
</dbReference>
<dbReference type="GeneTree" id="ENSGT00950000183090"/>
<dbReference type="HOGENOM" id="CLU_022957_2_0_1"/>
<dbReference type="InParanoid" id="Q04174"/>
<dbReference type="OMA" id="GIMHQNG"/>
<dbReference type="OrthoDB" id="10066429at2759"/>
<dbReference type="BioCyc" id="YEAST:YOR149C-MONOMER"/>
<dbReference type="Reactome" id="R-SCE-162710">
    <property type="pathway name" value="Synthesis of glycosylphosphatidylinositol (GPI)"/>
</dbReference>
<dbReference type="UniPathway" id="UPA00196"/>
<dbReference type="BioGRID-ORCS" id="854320">
    <property type="hits" value="6 hits in 10 CRISPR screens"/>
</dbReference>
<dbReference type="PRO" id="PR:Q04174"/>
<dbReference type="Proteomes" id="UP000002311">
    <property type="component" value="Chromosome XV"/>
</dbReference>
<dbReference type="RNAct" id="Q04174">
    <property type="molecule type" value="protein"/>
</dbReference>
<dbReference type="GO" id="GO:0005783">
    <property type="term" value="C:endoplasmic reticulum"/>
    <property type="evidence" value="ECO:0007005"/>
    <property type="project" value="SGD"/>
</dbReference>
<dbReference type="GO" id="GO:0005789">
    <property type="term" value="C:endoplasmic reticulum membrane"/>
    <property type="evidence" value="ECO:0000318"/>
    <property type="project" value="GO_Central"/>
</dbReference>
<dbReference type="GO" id="GO:0000026">
    <property type="term" value="F:alpha-1,2-mannosyltransferase activity"/>
    <property type="evidence" value="ECO:0000315"/>
    <property type="project" value="SGD"/>
</dbReference>
<dbReference type="GO" id="GO:0006506">
    <property type="term" value="P:GPI anchor biosynthetic process"/>
    <property type="evidence" value="ECO:0000315"/>
    <property type="project" value="SGD"/>
</dbReference>
<dbReference type="GO" id="GO:0006276">
    <property type="term" value="P:plasmid maintenance"/>
    <property type="evidence" value="ECO:0000315"/>
    <property type="project" value="SGD"/>
</dbReference>
<dbReference type="InterPro" id="IPR005599">
    <property type="entry name" value="GPI_mannosylTrfase"/>
</dbReference>
<dbReference type="PANTHER" id="PTHR22760">
    <property type="entry name" value="GLYCOSYLTRANSFERASE"/>
    <property type="match status" value="1"/>
</dbReference>
<dbReference type="PANTHER" id="PTHR22760:SF3">
    <property type="entry name" value="GPI MANNOSYLTRANSFERASE 4"/>
    <property type="match status" value="1"/>
</dbReference>
<dbReference type="Pfam" id="PF03901">
    <property type="entry name" value="Glyco_transf_22"/>
    <property type="match status" value="1"/>
</dbReference>
<name>SMP3_YEAST</name>
<evidence type="ECO:0000255" key="1"/>
<evidence type="ECO:0000269" key="2">
    <source>
    </source>
</evidence>
<evidence type="ECO:0000305" key="3"/>
<feature type="chain" id="PRO_0000071977" description="GPI mannosyltransferase 4">
    <location>
        <begin position="1"/>
        <end position="516"/>
    </location>
</feature>
<feature type="topological domain" description="Lumenal" evidence="1">
    <location>
        <begin position="1"/>
        <end position="5"/>
    </location>
</feature>
<feature type="transmembrane region" description="Helical" evidence="1">
    <location>
        <begin position="6"/>
        <end position="26"/>
    </location>
</feature>
<feature type="topological domain" description="Cytoplasmic" evidence="1">
    <location>
        <begin position="27"/>
        <end position="60"/>
    </location>
</feature>
<feature type="transmembrane region" description="Helical" evidence="1">
    <location>
        <begin position="61"/>
        <end position="81"/>
    </location>
</feature>
<feature type="topological domain" description="Lumenal" evidence="1">
    <location>
        <begin position="82"/>
        <end position="175"/>
    </location>
</feature>
<feature type="transmembrane region" description="Helical" evidence="1">
    <location>
        <begin position="176"/>
        <end position="196"/>
    </location>
</feature>
<feature type="topological domain" description="Cytoplasmic" evidence="1">
    <location>
        <begin position="197"/>
        <end position="210"/>
    </location>
</feature>
<feature type="transmembrane region" description="Helical" evidence="1">
    <location>
        <begin position="211"/>
        <end position="231"/>
    </location>
</feature>
<feature type="topological domain" description="Lumenal" evidence="1">
    <location>
        <begin position="232"/>
        <end position="270"/>
    </location>
</feature>
<feature type="transmembrane region" description="Helical" evidence="1">
    <location>
        <begin position="271"/>
        <end position="291"/>
    </location>
</feature>
<feature type="topological domain" description="Cytoplasmic" evidence="1">
    <location>
        <begin position="292"/>
        <end position="295"/>
    </location>
</feature>
<feature type="transmembrane region" description="Helical" evidence="1">
    <location>
        <begin position="296"/>
        <end position="316"/>
    </location>
</feature>
<feature type="topological domain" description="Lumenal" evidence="1">
    <location>
        <position position="317"/>
    </location>
</feature>
<feature type="transmembrane region" description="Helical" evidence="1">
    <location>
        <begin position="318"/>
        <end position="338"/>
    </location>
</feature>
<feature type="topological domain" description="Cytoplasmic" evidence="1">
    <location>
        <begin position="339"/>
        <end position="348"/>
    </location>
</feature>
<feature type="transmembrane region" description="Helical" evidence="1">
    <location>
        <begin position="349"/>
        <end position="369"/>
    </location>
</feature>
<feature type="topological domain" description="Lumenal" evidence="1">
    <location>
        <begin position="370"/>
        <end position="516"/>
    </location>
</feature>
<feature type="glycosylation site" description="N-linked (GlcNAc...) asparagine" evidence="1">
    <location>
        <position position="403"/>
    </location>
</feature>
<feature type="glycosylation site" description="N-linked (GlcNAc...) asparagine" evidence="1">
    <location>
        <position position="452"/>
    </location>
</feature>
<feature type="sequence conflict" description="In Ref. 2; AAC49635 and 3; CAA99355." evidence="3" ref="2 3">
    <original>IK</original>
    <variation>MQ</variation>
    <location>
        <begin position="122"/>
        <end position="123"/>
    </location>
</feature>
<feature type="sequence conflict" description="In Ref. 1; CAA41123." evidence="3" ref="1">
    <original>E</original>
    <variation>G</variation>
    <location>
        <position position="163"/>
    </location>
</feature>
<feature type="sequence conflict" description="In Ref. 1; CAA41123." evidence="3" ref="1">
    <original>S</original>
    <variation>R</variation>
    <location>
        <position position="169"/>
    </location>
</feature>
<feature type="sequence conflict" description="In Ref. 1; CAA41123." evidence="3" ref="1">
    <original>V</original>
    <variation>L</variation>
    <location>
        <position position="279"/>
    </location>
</feature>
<keyword id="KW-0256">Endoplasmic reticulum</keyword>
<keyword id="KW-0325">Glycoprotein</keyword>
<keyword id="KW-0328">Glycosyltransferase</keyword>
<keyword id="KW-0337">GPI-anchor biosynthesis</keyword>
<keyword id="KW-0472">Membrane</keyword>
<keyword id="KW-1185">Reference proteome</keyword>
<keyword id="KW-0808">Transferase</keyword>
<keyword id="KW-0812">Transmembrane</keyword>
<keyword id="KW-1133">Transmembrane helix</keyword>
<gene>
    <name type="primary">SMP3</name>
    <name type="synonym">LAS2</name>
    <name type="synonym">SAP2</name>
    <name type="ordered locus">YOR149C</name>
</gene>
<comment type="function">
    <text evidence="2">Alpha-1,2-mannosyltransferase involved in glycosylphosphatidylinositol-anchor biosynthesis. Transfers a fourth mannose to trimannosyl-GPIs during GPI precursor assembly. The presence of a fourth mannose in GPI is essential in fungi. Involved in plasmid maintenance with SMP2.</text>
</comment>
<comment type="pathway">
    <text>Glycolipid biosynthesis; glycosylphosphatidylinositol-anchor biosynthesis.</text>
</comment>
<comment type="subcellular location">
    <subcellularLocation>
        <location evidence="3">Endoplasmic reticulum membrane</location>
        <topology evidence="3">Multi-pass membrane protein</topology>
    </subcellularLocation>
</comment>
<comment type="similarity">
    <text evidence="3">Belongs to the glycosyltransferase 22 family. PIGZ subfamily.</text>
</comment>
<reference key="1">
    <citation type="journal article" date="1991" name="Mol. Gen. Genet.">
        <title>Mutations in a Saccharomyces cerevisiae host showing increased holding stability of the heterologous plasmid pSR1.</title>
        <authorList>
            <person name="Irie K."/>
            <person name="Araki H."/>
            <person name="Oshima Y."/>
        </authorList>
    </citation>
    <scope>NUCLEOTIDE SEQUENCE [GENOMIC DNA]</scope>
    <source>
        <strain>NBW5</strain>
    </source>
</reference>
<reference key="2">
    <citation type="journal article" date="1997" name="Yeast">
        <title>Analysis of a 35.6 kb region on the right arm of Saccharomyces cerevisiae chromosome XV.</title>
        <authorList>
            <person name="Bordonne R."/>
            <person name="Camasses A."/>
            <person name="Madania A."/>
            <person name="Poch O."/>
            <person name="Tarassov I.A."/>
            <person name="Winsor B."/>
            <person name="Martin R.P."/>
        </authorList>
    </citation>
    <scope>NUCLEOTIDE SEQUENCE [GENOMIC DNA]</scope>
    <source>
        <strain>S288c / FY1678</strain>
    </source>
</reference>
<reference key="3">
    <citation type="journal article" date="1997" name="Nature">
        <title>The nucleotide sequence of Saccharomyces cerevisiae chromosome XV.</title>
        <authorList>
            <person name="Dujon B."/>
            <person name="Albermann K."/>
            <person name="Aldea M."/>
            <person name="Alexandraki D."/>
            <person name="Ansorge W."/>
            <person name="Arino J."/>
            <person name="Benes V."/>
            <person name="Bohn C."/>
            <person name="Bolotin-Fukuhara M."/>
            <person name="Bordonne R."/>
            <person name="Boyer J."/>
            <person name="Camasses A."/>
            <person name="Casamayor A."/>
            <person name="Casas C."/>
            <person name="Cheret G."/>
            <person name="Cziepluch C."/>
            <person name="Daignan-Fornier B."/>
            <person name="Dang V.-D."/>
            <person name="de Haan M."/>
            <person name="Delius H."/>
            <person name="Durand P."/>
            <person name="Fairhead C."/>
            <person name="Feldmann H."/>
            <person name="Gaillon L."/>
            <person name="Galisson F."/>
            <person name="Gamo F.-J."/>
            <person name="Gancedo C."/>
            <person name="Goffeau A."/>
            <person name="Goulding S.E."/>
            <person name="Grivell L.A."/>
            <person name="Habbig B."/>
            <person name="Hand N.J."/>
            <person name="Hani J."/>
            <person name="Hattenhorst U."/>
            <person name="Hebling U."/>
            <person name="Hernando Y."/>
            <person name="Herrero E."/>
            <person name="Heumann K."/>
            <person name="Hiesel R."/>
            <person name="Hilger F."/>
            <person name="Hofmann B."/>
            <person name="Hollenberg C.P."/>
            <person name="Hughes B."/>
            <person name="Jauniaux J.-C."/>
            <person name="Kalogeropoulos A."/>
            <person name="Katsoulou C."/>
            <person name="Kordes E."/>
            <person name="Lafuente M.J."/>
            <person name="Landt O."/>
            <person name="Louis E.J."/>
            <person name="Maarse A.C."/>
            <person name="Madania A."/>
            <person name="Mannhaupt G."/>
            <person name="Marck C."/>
            <person name="Martin R.P."/>
            <person name="Mewes H.-W."/>
            <person name="Michaux G."/>
            <person name="Paces V."/>
            <person name="Parle-McDermott A.G."/>
            <person name="Pearson B.M."/>
            <person name="Perrin A."/>
            <person name="Pettersson B."/>
            <person name="Poch O."/>
            <person name="Pohl T.M."/>
            <person name="Poirey R."/>
            <person name="Portetelle D."/>
            <person name="Pujol A."/>
            <person name="Purnelle B."/>
            <person name="Ramezani Rad M."/>
            <person name="Rechmann S."/>
            <person name="Schwager C."/>
            <person name="Schweizer M."/>
            <person name="Sor F."/>
            <person name="Sterky F."/>
            <person name="Tarassov I.A."/>
            <person name="Teodoru C."/>
            <person name="Tettelin H."/>
            <person name="Thierry A."/>
            <person name="Tobiasch E."/>
            <person name="Tzermia M."/>
            <person name="Uhlen M."/>
            <person name="Unseld M."/>
            <person name="Valens M."/>
            <person name="Vandenbol M."/>
            <person name="Vetter I."/>
            <person name="Vlcek C."/>
            <person name="Voet M."/>
            <person name="Volckaert G."/>
            <person name="Voss H."/>
            <person name="Wambutt R."/>
            <person name="Wedler H."/>
            <person name="Wiemann S."/>
            <person name="Winsor B."/>
            <person name="Wolfe K.H."/>
            <person name="Zollner A."/>
            <person name="Zumstein E."/>
            <person name="Kleine K."/>
        </authorList>
    </citation>
    <scope>NUCLEOTIDE SEQUENCE [LARGE SCALE GENOMIC DNA]</scope>
    <source>
        <strain>ATCC 204508 / S288c</strain>
    </source>
</reference>
<reference key="4">
    <citation type="journal article" date="2014" name="G3 (Bethesda)">
        <title>The reference genome sequence of Saccharomyces cerevisiae: Then and now.</title>
        <authorList>
            <person name="Engel S.R."/>
            <person name="Dietrich F.S."/>
            <person name="Fisk D.G."/>
            <person name="Binkley G."/>
            <person name="Balakrishnan R."/>
            <person name="Costanzo M.C."/>
            <person name="Dwight S.S."/>
            <person name="Hitz B.C."/>
            <person name="Karra K."/>
            <person name="Nash R.S."/>
            <person name="Weng S."/>
            <person name="Wong E.D."/>
            <person name="Lloyd P."/>
            <person name="Skrzypek M.S."/>
            <person name="Miyasato S.R."/>
            <person name="Simison M."/>
            <person name="Cherry J.M."/>
        </authorList>
    </citation>
    <scope>GENOME REANNOTATION</scope>
    <scope>SEQUENCE REVISION TO 122-123</scope>
    <source>
        <strain>ATCC 204508 / S288c</strain>
    </source>
</reference>
<reference key="5">
    <citation type="journal article" date="2001" name="J. Biol. Chem.">
        <title>The essential Smp3 protein is required for addition of the side-branching fourth mannose during assembly of yeast glycosylphosphatidylinositols.</title>
        <authorList>
            <person name="Grimme S.J."/>
            <person name="Westfall B.A."/>
            <person name="Wiedman J.M."/>
            <person name="Taron C.H."/>
            <person name="Orlean P."/>
        </authorList>
    </citation>
    <scope>FUNCTION</scope>
</reference>
<reference key="6">
    <citation type="journal article" date="2006" name="Proc. Natl. Acad. Sci. U.S.A.">
        <title>A global topology map of the Saccharomyces cerevisiae membrane proteome.</title>
        <authorList>
            <person name="Kim H."/>
            <person name="Melen K."/>
            <person name="Oesterberg M."/>
            <person name="von Heijne G."/>
        </authorList>
    </citation>
    <scope>TOPOLOGY [LARGE SCALE ANALYSIS]</scope>
    <source>
        <strain>ATCC 208353 / W303-1A</strain>
    </source>
</reference>
<accession>Q04174</accession>
<accession>D6W2K6</accession>
<accession>Q99400</accession>
<sequence length="516" mass="59883">MMRYQWWLYLVYAIGLMLCLGPSYIHPDEHFQCIEILAMQFMKVKGTIPWEFKSKFAARSYGPLLLVYGPLFTILESFPEIQDNPALILYSMRLQNYVMYLLCYHFLIPKLIRDERKAVQFIKKSLLLTSYVTWTYQTHTFSNSIETLALISTLTVMEDMVNEKNIQRSNFKNSVILGLIFSFGVFNRVTFPAFIFLPCLILFWKFYRVHWKSFSLLLLSFSFSSCLFVLIDTNIYNNGKGFVITPLNNLKYNLNVQNLQVHGLHPRYTHLLVNLPQIVGPVLLLAIFSGYKLDKLSTYAIISGLLFLSFFQHQELRFLVPLVPLLVTNLNWTPLSSTLVNKKIFKGTWLLFNIIMAFIMGISHQAGIIQFLGDYFHFRTEQMGVHIWWKTYSPPTWMYMSNNLTVSSLINTQDGIESIDEVAFSVGNHHVIDLKGCDLPLLTETIRRLRLNGSITPLTLVTPNSMTSELKKLKRDGTINLIPKRNYLFHLDLDHLDFNDFTTFKPGLTVYSIELL</sequence>
<organism>
    <name type="scientific">Saccharomyces cerevisiae (strain ATCC 204508 / S288c)</name>
    <name type="common">Baker's yeast</name>
    <dbReference type="NCBI Taxonomy" id="559292"/>
    <lineage>
        <taxon>Eukaryota</taxon>
        <taxon>Fungi</taxon>
        <taxon>Dikarya</taxon>
        <taxon>Ascomycota</taxon>
        <taxon>Saccharomycotina</taxon>
        <taxon>Saccharomycetes</taxon>
        <taxon>Saccharomycetales</taxon>
        <taxon>Saccharomycetaceae</taxon>
        <taxon>Saccharomyces</taxon>
    </lineage>
</organism>
<protein>
    <recommendedName>
        <fullName>GPI mannosyltransferase 4</fullName>
        <ecNumber>2.4.1.-</ecNumber>
    </recommendedName>
    <alternativeName>
        <fullName>GPI mannosyltransferase IV</fullName>
        <shortName>GPI-MT-IV</shortName>
    </alternativeName>
</protein>
<proteinExistence type="evidence at protein level"/>